<comment type="function">
    <text evidence="1">Pore-forming subunit of a potassium efflux system that confers protection against electrophiles. Catalyzes K(+)/H(+) antiport.</text>
</comment>
<comment type="subunit">
    <text evidence="1">Homodimer. Interacts with the regulatory subunit KefF.</text>
</comment>
<comment type="subcellular location">
    <subcellularLocation>
        <location evidence="1">Cell inner membrane</location>
        <topology evidence="1">Multi-pass membrane protein</topology>
    </subcellularLocation>
</comment>
<comment type="similarity">
    <text evidence="1">Belongs to the monovalent cation:proton antiporter 2 (CPA2) transporter (TC 2.A.37) family. KefC subfamily.</text>
</comment>
<keyword id="KW-0050">Antiport</keyword>
<keyword id="KW-0997">Cell inner membrane</keyword>
<keyword id="KW-1003">Cell membrane</keyword>
<keyword id="KW-0406">Ion transport</keyword>
<keyword id="KW-0472">Membrane</keyword>
<keyword id="KW-0630">Potassium</keyword>
<keyword id="KW-0633">Potassium transport</keyword>
<keyword id="KW-1185">Reference proteome</keyword>
<keyword id="KW-0812">Transmembrane</keyword>
<keyword id="KW-1133">Transmembrane helix</keyword>
<keyword id="KW-0813">Transport</keyword>
<evidence type="ECO:0000255" key="1">
    <source>
        <dbReference type="HAMAP-Rule" id="MF_01413"/>
    </source>
</evidence>
<evidence type="ECO:0000255" key="2">
    <source>
        <dbReference type="PROSITE-ProRule" id="PRU00543"/>
    </source>
</evidence>
<evidence type="ECO:0000256" key="3">
    <source>
        <dbReference type="SAM" id="MobiDB-lite"/>
    </source>
</evidence>
<protein>
    <recommendedName>
        <fullName evidence="1">Glutathione-regulated potassium-efflux system protein KefC</fullName>
    </recommendedName>
    <alternativeName>
        <fullName evidence="1">K(+)/H(+) antiporter</fullName>
    </alternativeName>
</protein>
<sequence length="620" mass="67736">MDSHTLVQALIYLGSAALIVPIAVRLGLGSVLGYLIAGCIIGPWGLRLVTDAESILHFAEIGVVLMLFIIGLELDPQRLWKLRAAVFGGGALQMVICGGLLGLFCMLLGLRWQVAELIGMTLALSSTAIAMQAMNERNLMVTQMGRSAFAVLLFQDIAAIPLVAMIPLLATSSASTTMGAFALSALKVAGALVLVVLLGRYVTRPALRFVARSGLREVFSAVALFLVFGFGLLLEEVGLSMAMGAFLAGVLLASSEYRHALESDIEPFKGLLLGLFFIGVGMSIDFGTLLENPLRIVILLLGFLIIKIAMLWLIARPLQVPNKQRRWFAVLLGQGSEFAFVVFGAAQMANVLEPEWAKSLTLAVALSMAATPILLVILNRLEQSSTEEAREADEIDEEQPRVIIAGFGRFGQITGRLLLSSGVKMVVLDHDPDHIETLRKFGMKVFYGDATRMDLLESAGAAKAEVLINAIDDPQTNLQLTEMVKEHFPHLQIIARARDVDHYIRLRQAGVEKPERETFEGALKTGRLALESLGLGPYEARERADVFRRFNIQMVEEMAMVENDTKARAAVYKRTSAMLSEIITEDREHLSLIQRHGWQGTEEGKHTGNMADEPETKPSS</sequence>
<proteinExistence type="inferred from homology"/>
<dbReference type="EMBL" id="CP000800">
    <property type="protein sequence ID" value="ABV21001.1"/>
    <property type="molecule type" value="Genomic_DNA"/>
</dbReference>
<dbReference type="RefSeq" id="WP_000377194.1">
    <property type="nucleotide sequence ID" value="NC_009801.1"/>
</dbReference>
<dbReference type="SMR" id="A7ZHE0"/>
<dbReference type="GeneID" id="75202135"/>
<dbReference type="KEGG" id="ecw:EcE24377A_0051"/>
<dbReference type="HOGENOM" id="CLU_005126_9_3_6"/>
<dbReference type="Proteomes" id="UP000001122">
    <property type="component" value="Chromosome"/>
</dbReference>
<dbReference type="GO" id="GO:0005886">
    <property type="term" value="C:plasma membrane"/>
    <property type="evidence" value="ECO:0007669"/>
    <property type="project" value="UniProtKB-SubCell"/>
</dbReference>
<dbReference type="GO" id="GO:0019899">
    <property type="term" value="F:enzyme binding"/>
    <property type="evidence" value="ECO:0007669"/>
    <property type="project" value="InterPro"/>
</dbReference>
<dbReference type="GO" id="GO:0015503">
    <property type="term" value="F:glutathione-regulated potassium exporter activity"/>
    <property type="evidence" value="ECO:0007669"/>
    <property type="project" value="UniProtKB-UniRule"/>
</dbReference>
<dbReference type="GO" id="GO:0015643">
    <property type="term" value="F:toxic substance binding"/>
    <property type="evidence" value="ECO:0007669"/>
    <property type="project" value="InterPro"/>
</dbReference>
<dbReference type="GO" id="GO:1902600">
    <property type="term" value="P:proton transmembrane transport"/>
    <property type="evidence" value="ECO:0007669"/>
    <property type="project" value="InterPro"/>
</dbReference>
<dbReference type="GO" id="GO:0051595">
    <property type="term" value="P:response to methylglyoxal"/>
    <property type="evidence" value="ECO:0007669"/>
    <property type="project" value="InterPro"/>
</dbReference>
<dbReference type="FunFam" id="1.20.1530.20:FF:000001">
    <property type="entry name" value="Glutathione-regulated potassium-efflux system protein KefB"/>
    <property type="match status" value="1"/>
</dbReference>
<dbReference type="FunFam" id="3.40.50.720:FF:000036">
    <property type="entry name" value="Glutathione-regulated potassium-efflux system protein KefB"/>
    <property type="match status" value="1"/>
</dbReference>
<dbReference type="Gene3D" id="1.20.1530.20">
    <property type="match status" value="1"/>
</dbReference>
<dbReference type="Gene3D" id="3.40.50.720">
    <property type="entry name" value="NAD(P)-binding Rossmann-like Domain"/>
    <property type="match status" value="1"/>
</dbReference>
<dbReference type="HAMAP" id="MF_01413">
    <property type="entry name" value="K_H_efflux_KefC"/>
    <property type="match status" value="1"/>
</dbReference>
<dbReference type="InterPro" id="IPR006153">
    <property type="entry name" value="Cation/H_exchanger_TM"/>
</dbReference>
<dbReference type="InterPro" id="IPR004771">
    <property type="entry name" value="K/H_exchanger"/>
</dbReference>
<dbReference type="InterPro" id="IPR023941">
    <property type="entry name" value="K_H_efflux_KefC"/>
</dbReference>
<dbReference type="InterPro" id="IPR006036">
    <property type="entry name" value="K_uptake_TrkA"/>
</dbReference>
<dbReference type="InterPro" id="IPR038770">
    <property type="entry name" value="Na+/solute_symporter_sf"/>
</dbReference>
<dbReference type="InterPro" id="IPR036291">
    <property type="entry name" value="NAD(P)-bd_dom_sf"/>
</dbReference>
<dbReference type="InterPro" id="IPR003148">
    <property type="entry name" value="RCK_N"/>
</dbReference>
<dbReference type="NCBIfam" id="TIGR00932">
    <property type="entry name" value="2a37"/>
    <property type="match status" value="1"/>
</dbReference>
<dbReference type="NCBIfam" id="NF002924">
    <property type="entry name" value="PRK03562.1"/>
    <property type="match status" value="1"/>
</dbReference>
<dbReference type="PANTHER" id="PTHR46157:SF3">
    <property type="entry name" value="GLUTATHIONE-REGULATED POTASSIUM-EFFLUX SYSTEM PROTEIN KEFC"/>
    <property type="match status" value="1"/>
</dbReference>
<dbReference type="PANTHER" id="PTHR46157">
    <property type="entry name" value="K(+) EFFLUX ANTIPORTER 3, CHLOROPLASTIC"/>
    <property type="match status" value="1"/>
</dbReference>
<dbReference type="Pfam" id="PF00999">
    <property type="entry name" value="Na_H_Exchanger"/>
    <property type="match status" value="1"/>
</dbReference>
<dbReference type="Pfam" id="PF02254">
    <property type="entry name" value="TrkA_N"/>
    <property type="match status" value="1"/>
</dbReference>
<dbReference type="PRINTS" id="PR00335">
    <property type="entry name" value="KUPTAKETRKA"/>
</dbReference>
<dbReference type="SUPFAM" id="SSF51735">
    <property type="entry name" value="NAD(P)-binding Rossmann-fold domains"/>
    <property type="match status" value="1"/>
</dbReference>
<dbReference type="PROSITE" id="PS51201">
    <property type="entry name" value="RCK_N"/>
    <property type="match status" value="1"/>
</dbReference>
<gene>
    <name evidence="1" type="primary">kefC</name>
    <name type="ordered locus">EcE24377A_0051</name>
</gene>
<feature type="chain" id="PRO_1000087389" description="Glutathione-regulated potassium-efflux system protein KefC">
    <location>
        <begin position="1"/>
        <end position="620"/>
    </location>
</feature>
<feature type="transmembrane region" description="Helical" evidence="1">
    <location>
        <begin position="4"/>
        <end position="24"/>
    </location>
</feature>
<feature type="transmembrane region" description="Helical" evidence="1">
    <location>
        <begin position="26"/>
        <end position="46"/>
    </location>
</feature>
<feature type="transmembrane region" description="Helical" evidence="1">
    <location>
        <begin position="54"/>
        <end position="74"/>
    </location>
</feature>
<feature type="transmembrane region" description="Helical" evidence="1">
    <location>
        <begin position="90"/>
        <end position="110"/>
    </location>
</feature>
<feature type="transmembrane region" description="Helical" evidence="1">
    <location>
        <begin position="114"/>
        <end position="134"/>
    </location>
</feature>
<feature type="transmembrane region" description="Helical" evidence="1">
    <location>
        <begin position="149"/>
        <end position="169"/>
    </location>
</feature>
<feature type="transmembrane region" description="Helical" evidence="1">
    <location>
        <begin position="178"/>
        <end position="198"/>
    </location>
</feature>
<feature type="transmembrane region" description="Helical" evidence="1">
    <location>
        <begin position="218"/>
        <end position="238"/>
    </location>
</feature>
<feature type="transmembrane region" description="Helical" evidence="1">
    <location>
        <begin position="270"/>
        <end position="290"/>
    </location>
</feature>
<feature type="transmembrane region" description="Helical" evidence="1">
    <location>
        <begin position="294"/>
        <end position="314"/>
    </location>
</feature>
<feature type="transmembrane region" description="Helical" evidence="1">
    <location>
        <begin position="327"/>
        <end position="347"/>
    </location>
</feature>
<feature type="transmembrane region" description="Helical" evidence="1">
    <location>
        <begin position="359"/>
        <end position="379"/>
    </location>
</feature>
<feature type="domain" description="RCK N-terminal" evidence="2">
    <location>
        <begin position="399"/>
        <end position="518"/>
    </location>
</feature>
<feature type="region of interest" description="Disordered" evidence="3">
    <location>
        <begin position="597"/>
        <end position="620"/>
    </location>
</feature>
<name>KEFC_ECO24</name>
<organism>
    <name type="scientific">Escherichia coli O139:H28 (strain E24377A / ETEC)</name>
    <dbReference type="NCBI Taxonomy" id="331111"/>
    <lineage>
        <taxon>Bacteria</taxon>
        <taxon>Pseudomonadati</taxon>
        <taxon>Pseudomonadota</taxon>
        <taxon>Gammaproteobacteria</taxon>
        <taxon>Enterobacterales</taxon>
        <taxon>Enterobacteriaceae</taxon>
        <taxon>Escherichia</taxon>
    </lineage>
</organism>
<reference key="1">
    <citation type="journal article" date="2008" name="J. Bacteriol.">
        <title>The pangenome structure of Escherichia coli: comparative genomic analysis of E. coli commensal and pathogenic isolates.</title>
        <authorList>
            <person name="Rasko D.A."/>
            <person name="Rosovitz M.J."/>
            <person name="Myers G.S.A."/>
            <person name="Mongodin E.F."/>
            <person name="Fricke W.F."/>
            <person name="Gajer P."/>
            <person name="Crabtree J."/>
            <person name="Sebaihia M."/>
            <person name="Thomson N.R."/>
            <person name="Chaudhuri R."/>
            <person name="Henderson I.R."/>
            <person name="Sperandio V."/>
            <person name="Ravel J."/>
        </authorList>
    </citation>
    <scope>NUCLEOTIDE SEQUENCE [LARGE SCALE GENOMIC DNA]</scope>
    <source>
        <strain>E24377A / ETEC</strain>
    </source>
</reference>
<accession>A7ZHE0</accession>